<reference key="1">
    <citation type="journal article" date="2002" name="Nature">
        <title>The genome sequence of Schizosaccharomyces pombe.</title>
        <authorList>
            <person name="Wood V."/>
            <person name="Gwilliam R."/>
            <person name="Rajandream M.A."/>
            <person name="Lyne M.H."/>
            <person name="Lyne R."/>
            <person name="Stewart A."/>
            <person name="Sgouros J.G."/>
            <person name="Peat N."/>
            <person name="Hayles J."/>
            <person name="Baker S.G."/>
            <person name="Basham D."/>
            <person name="Bowman S."/>
            <person name="Brooks K."/>
            <person name="Brown D."/>
            <person name="Brown S."/>
            <person name="Chillingworth T."/>
            <person name="Churcher C.M."/>
            <person name="Collins M."/>
            <person name="Connor R."/>
            <person name="Cronin A."/>
            <person name="Davis P."/>
            <person name="Feltwell T."/>
            <person name="Fraser A."/>
            <person name="Gentles S."/>
            <person name="Goble A."/>
            <person name="Hamlin N."/>
            <person name="Harris D.E."/>
            <person name="Hidalgo J."/>
            <person name="Hodgson G."/>
            <person name="Holroyd S."/>
            <person name="Hornsby T."/>
            <person name="Howarth S."/>
            <person name="Huckle E.J."/>
            <person name="Hunt S."/>
            <person name="Jagels K."/>
            <person name="James K.D."/>
            <person name="Jones L."/>
            <person name="Jones M."/>
            <person name="Leather S."/>
            <person name="McDonald S."/>
            <person name="McLean J."/>
            <person name="Mooney P."/>
            <person name="Moule S."/>
            <person name="Mungall K.L."/>
            <person name="Murphy L.D."/>
            <person name="Niblett D."/>
            <person name="Odell C."/>
            <person name="Oliver K."/>
            <person name="O'Neil S."/>
            <person name="Pearson D."/>
            <person name="Quail M.A."/>
            <person name="Rabbinowitsch E."/>
            <person name="Rutherford K.M."/>
            <person name="Rutter S."/>
            <person name="Saunders D."/>
            <person name="Seeger K."/>
            <person name="Sharp S."/>
            <person name="Skelton J."/>
            <person name="Simmonds M.N."/>
            <person name="Squares R."/>
            <person name="Squares S."/>
            <person name="Stevens K."/>
            <person name="Taylor K."/>
            <person name="Taylor R.G."/>
            <person name="Tivey A."/>
            <person name="Walsh S.V."/>
            <person name="Warren T."/>
            <person name="Whitehead S."/>
            <person name="Woodward J.R."/>
            <person name="Volckaert G."/>
            <person name="Aert R."/>
            <person name="Robben J."/>
            <person name="Grymonprez B."/>
            <person name="Weltjens I."/>
            <person name="Vanstreels E."/>
            <person name="Rieger M."/>
            <person name="Schaefer M."/>
            <person name="Mueller-Auer S."/>
            <person name="Gabel C."/>
            <person name="Fuchs M."/>
            <person name="Duesterhoeft A."/>
            <person name="Fritzc C."/>
            <person name="Holzer E."/>
            <person name="Moestl D."/>
            <person name="Hilbert H."/>
            <person name="Borzym K."/>
            <person name="Langer I."/>
            <person name="Beck A."/>
            <person name="Lehrach H."/>
            <person name="Reinhardt R."/>
            <person name="Pohl T.M."/>
            <person name="Eger P."/>
            <person name="Zimmermann W."/>
            <person name="Wedler H."/>
            <person name="Wambutt R."/>
            <person name="Purnelle B."/>
            <person name="Goffeau A."/>
            <person name="Cadieu E."/>
            <person name="Dreano S."/>
            <person name="Gloux S."/>
            <person name="Lelaure V."/>
            <person name="Mottier S."/>
            <person name="Galibert F."/>
            <person name="Aves S.J."/>
            <person name="Xiang Z."/>
            <person name="Hunt C."/>
            <person name="Moore K."/>
            <person name="Hurst S.M."/>
            <person name="Lucas M."/>
            <person name="Rochet M."/>
            <person name="Gaillardin C."/>
            <person name="Tallada V.A."/>
            <person name="Garzon A."/>
            <person name="Thode G."/>
            <person name="Daga R.R."/>
            <person name="Cruzado L."/>
            <person name="Jimenez J."/>
            <person name="Sanchez M."/>
            <person name="del Rey F."/>
            <person name="Benito J."/>
            <person name="Dominguez A."/>
            <person name="Revuelta J.L."/>
            <person name="Moreno S."/>
            <person name="Armstrong J."/>
            <person name="Forsburg S.L."/>
            <person name="Cerutti L."/>
            <person name="Lowe T."/>
            <person name="McCombie W.R."/>
            <person name="Paulsen I."/>
            <person name="Potashkin J."/>
            <person name="Shpakovski G.V."/>
            <person name="Ussery D."/>
            <person name="Barrell B.G."/>
            <person name="Nurse P."/>
        </authorList>
    </citation>
    <scope>NUCLEOTIDE SEQUENCE [LARGE SCALE GENOMIC DNA]</scope>
    <source>
        <strain>972 / ATCC 24843</strain>
    </source>
</reference>
<reference key="2">
    <citation type="journal article" date="2011" name="Science">
        <title>Comparative functional genomics of the fission yeasts.</title>
        <authorList>
            <person name="Rhind N."/>
            <person name="Chen Z."/>
            <person name="Yassour M."/>
            <person name="Thompson D.A."/>
            <person name="Haas B.J."/>
            <person name="Habib N."/>
            <person name="Wapinski I."/>
            <person name="Roy S."/>
            <person name="Lin M.F."/>
            <person name="Heiman D.I."/>
            <person name="Young S.K."/>
            <person name="Furuya K."/>
            <person name="Guo Y."/>
            <person name="Pidoux A."/>
            <person name="Chen H.M."/>
            <person name="Robbertse B."/>
            <person name="Goldberg J.M."/>
            <person name="Aoki K."/>
            <person name="Bayne E.H."/>
            <person name="Berlin A.M."/>
            <person name="Desjardins C.A."/>
            <person name="Dobbs E."/>
            <person name="Dukaj L."/>
            <person name="Fan L."/>
            <person name="FitzGerald M.G."/>
            <person name="French C."/>
            <person name="Gujja S."/>
            <person name="Hansen K."/>
            <person name="Keifenheim D."/>
            <person name="Levin J.Z."/>
            <person name="Mosher R.A."/>
            <person name="Mueller C.A."/>
            <person name="Pfiffner J."/>
            <person name="Priest M."/>
            <person name="Russ C."/>
            <person name="Smialowska A."/>
            <person name="Swoboda P."/>
            <person name="Sykes S.M."/>
            <person name="Vaughn M."/>
            <person name="Vengrova S."/>
            <person name="Yoder R."/>
            <person name="Zeng Q."/>
            <person name="Allshire R."/>
            <person name="Baulcombe D."/>
            <person name="Birren B.W."/>
            <person name="Brown W."/>
            <person name="Ekwall K."/>
            <person name="Kellis M."/>
            <person name="Leatherwood J."/>
            <person name="Levin H."/>
            <person name="Margalit H."/>
            <person name="Martienssen R."/>
            <person name="Nieduszynski C.A."/>
            <person name="Spatafora J.W."/>
            <person name="Friedman N."/>
            <person name="Dalgaard J.Z."/>
            <person name="Baumann P."/>
            <person name="Niki H."/>
            <person name="Regev A."/>
            <person name="Nusbaum C."/>
        </authorList>
    </citation>
    <scope>REVISION OF GENE MODEL</scope>
</reference>
<reference key="3">
    <citation type="journal article" date="2008" name="J. Proteome Res.">
        <title>Phosphoproteome analysis of fission yeast.</title>
        <authorList>
            <person name="Wilson-Grady J.T."/>
            <person name="Villen J."/>
            <person name="Gygi S.P."/>
        </authorList>
    </citation>
    <scope>PHOSPHORYLATION [LARGE SCALE ANALYSIS] AT SER-348; SER-352 AND TYR-355</scope>
    <scope>IDENTIFICATION BY MASS SPECTROMETRY</scope>
</reference>
<accession>O94695</accession>
<gene>
    <name type="ORF">SPBC83.11</name>
</gene>
<protein>
    <recommendedName>
        <fullName>Putative transporter C83.11</fullName>
    </recommendedName>
</protein>
<name>YG1B_SCHPO</name>
<comment type="subcellular location">
    <subcellularLocation>
        <location evidence="1">Membrane</location>
        <topology evidence="1">Multi-pass membrane protein</topology>
    </subcellularLocation>
</comment>
<comment type="similarity">
    <text evidence="1">Belongs to the TPT transporter family.</text>
</comment>
<feature type="chain" id="PRO_0000315881" description="Putative transporter C83.11">
    <location>
        <begin position="1"/>
        <end position="449"/>
    </location>
</feature>
<feature type="transmembrane region" description="Helical" evidence="1">
    <location>
        <begin position="7"/>
        <end position="27"/>
    </location>
</feature>
<feature type="transmembrane region" description="Helical" evidence="1">
    <location>
        <begin position="47"/>
        <end position="67"/>
    </location>
</feature>
<feature type="transmembrane region" description="Helical" evidence="1">
    <location>
        <begin position="84"/>
        <end position="104"/>
    </location>
</feature>
<feature type="transmembrane region" description="Helical" evidence="1">
    <location>
        <begin position="109"/>
        <end position="129"/>
    </location>
</feature>
<feature type="transmembrane region" description="Helical" evidence="1">
    <location>
        <begin position="136"/>
        <end position="156"/>
    </location>
</feature>
<feature type="transmembrane region" description="Helical" evidence="1">
    <location>
        <begin position="164"/>
        <end position="184"/>
    </location>
</feature>
<feature type="transmembrane region" description="Helical" evidence="1">
    <location>
        <begin position="205"/>
        <end position="225"/>
    </location>
</feature>
<feature type="transmembrane region" description="Helical" evidence="1">
    <location>
        <begin position="255"/>
        <end position="275"/>
    </location>
</feature>
<feature type="transmembrane region" description="Helical" evidence="1">
    <location>
        <begin position="278"/>
        <end position="298"/>
    </location>
</feature>
<feature type="region of interest" description="Disordered" evidence="2">
    <location>
        <begin position="382"/>
        <end position="416"/>
    </location>
</feature>
<feature type="compositionally biased region" description="Polar residues" evidence="2">
    <location>
        <begin position="382"/>
        <end position="415"/>
    </location>
</feature>
<feature type="modified residue" description="Phosphoserine" evidence="3">
    <location>
        <position position="348"/>
    </location>
</feature>
<feature type="modified residue" description="Phosphoserine" evidence="3">
    <location>
        <position position="352"/>
    </location>
</feature>
<feature type="modified residue" description="Phosphotyrosine" evidence="3">
    <location>
        <position position="355"/>
    </location>
</feature>
<evidence type="ECO:0000255" key="1"/>
<evidence type="ECO:0000256" key="2">
    <source>
        <dbReference type="SAM" id="MobiDB-lite"/>
    </source>
</evidence>
<evidence type="ECO:0000269" key="3">
    <source>
    </source>
</evidence>
<keyword id="KW-0472">Membrane</keyword>
<keyword id="KW-0597">Phosphoprotein</keyword>
<keyword id="KW-1185">Reference proteome</keyword>
<keyword id="KW-0812">Transmembrane</keyword>
<keyword id="KW-1133">Transmembrane helix</keyword>
<keyword id="KW-0813">Transport</keyword>
<dbReference type="EMBL" id="CU329671">
    <property type="protein sequence ID" value="CAB36873.2"/>
    <property type="molecule type" value="Genomic_DNA"/>
</dbReference>
<dbReference type="PIR" id="T40700">
    <property type="entry name" value="T40700"/>
</dbReference>
<dbReference type="SMR" id="O94695"/>
<dbReference type="BioGRID" id="277523">
    <property type="interactions" value="2"/>
</dbReference>
<dbReference type="FunCoup" id="O94695">
    <property type="interactions" value="395"/>
</dbReference>
<dbReference type="STRING" id="284812.O94695"/>
<dbReference type="TCDB" id="2.A.7.9.18">
    <property type="family name" value="the drug/metabolite transporter (dmt) superfamily"/>
</dbReference>
<dbReference type="iPTMnet" id="O94695"/>
<dbReference type="PaxDb" id="4896-SPBC83.11.1"/>
<dbReference type="EnsemblFungi" id="SPBC83.11.1">
    <property type="protein sequence ID" value="SPBC83.11.1:pep"/>
    <property type="gene ID" value="SPBC83.11"/>
</dbReference>
<dbReference type="KEGG" id="spo:2541008"/>
<dbReference type="PomBase" id="SPBC83.11"/>
<dbReference type="VEuPathDB" id="FungiDB:SPBC83.11"/>
<dbReference type="eggNOG" id="KOG1441">
    <property type="taxonomic scope" value="Eukaryota"/>
</dbReference>
<dbReference type="HOGENOM" id="CLU_019048_3_1_1"/>
<dbReference type="InParanoid" id="O94695"/>
<dbReference type="OMA" id="FWYTVSS"/>
<dbReference type="PRO" id="PR:O94695"/>
<dbReference type="Proteomes" id="UP000002485">
    <property type="component" value="Chromosome II"/>
</dbReference>
<dbReference type="GO" id="GO:0005783">
    <property type="term" value="C:endoplasmic reticulum"/>
    <property type="evidence" value="ECO:0000318"/>
    <property type="project" value="GO_Central"/>
</dbReference>
<dbReference type="GO" id="GO:0005794">
    <property type="term" value="C:Golgi apparatus"/>
    <property type="evidence" value="ECO:0000314"/>
    <property type="project" value="PomBase"/>
</dbReference>
<dbReference type="GO" id="GO:0000139">
    <property type="term" value="C:Golgi membrane"/>
    <property type="evidence" value="ECO:0000269"/>
    <property type="project" value="PomBase"/>
</dbReference>
<dbReference type="GO" id="GO:0015297">
    <property type="term" value="F:antiporter activity"/>
    <property type="evidence" value="ECO:0000318"/>
    <property type="project" value="GO_Central"/>
</dbReference>
<dbReference type="GO" id="GO:0089721">
    <property type="term" value="F:phosphoenolpyruvate transmembrane transporter activity"/>
    <property type="evidence" value="ECO:0000315"/>
    <property type="project" value="PomBase"/>
</dbReference>
<dbReference type="GO" id="GO:0071917">
    <property type="term" value="F:triose-phosphate transmembrane transporter activity"/>
    <property type="evidence" value="ECO:0000255"/>
    <property type="project" value="PomBase"/>
</dbReference>
<dbReference type="GO" id="GO:1990536">
    <property type="term" value="P:phosphoenolpyruvate transmembrane import into Golgi lumen"/>
    <property type="evidence" value="ECO:0000315"/>
    <property type="project" value="PomBase"/>
</dbReference>
<dbReference type="GO" id="GO:0035436">
    <property type="term" value="P:triose phosphate transmembrane transport"/>
    <property type="evidence" value="ECO:0000255"/>
    <property type="project" value="PomBase"/>
</dbReference>
<dbReference type="InterPro" id="IPR004853">
    <property type="entry name" value="Sugar_P_trans_dom"/>
</dbReference>
<dbReference type="InterPro" id="IPR050186">
    <property type="entry name" value="TPT_transporter"/>
</dbReference>
<dbReference type="PANTHER" id="PTHR11132">
    <property type="entry name" value="SOLUTE CARRIER FAMILY 35"/>
    <property type="match status" value="1"/>
</dbReference>
<dbReference type="Pfam" id="PF03151">
    <property type="entry name" value="TPT"/>
    <property type="match status" value="1"/>
</dbReference>
<organism>
    <name type="scientific">Schizosaccharomyces pombe (strain 972 / ATCC 24843)</name>
    <name type="common">Fission yeast</name>
    <dbReference type="NCBI Taxonomy" id="284812"/>
    <lineage>
        <taxon>Eukaryota</taxon>
        <taxon>Fungi</taxon>
        <taxon>Dikarya</taxon>
        <taxon>Ascomycota</taxon>
        <taxon>Taphrinomycotina</taxon>
        <taxon>Schizosaccharomycetes</taxon>
        <taxon>Schizosaccharomycetales</taxon>
        <taxon>Schizosaccharomycetaceae</taxon>
        <taxon>Schizosaccharomyces</taxon>
    </lineage>
</organism>
<sequence>MVLRERLSHILFHEKVGFLLLCLLWYISSAVTNTTSKSIFNELRCPVTLTFLQFGFVAFFSAVCLLFRKQFLGGTGIQKPSKYVLYTTLPLSIFQIGGHVFGSLATTKIPVSTVHTVKALSPLFTVLAYRFMFRHVYSAMTYFSLVPLTFGVTLACSFELSADIVGLLYALISTCIFVSQNIFGSKIFMEAKSHSTHTKKHYNKLNLLLYSSGVAFIVMIPVWLYQEGFAYLPEVGSPVFLNLIYNGLSHFFQNILAFTLLSIISPVAYSIASLIKRIFVIVVSIIWFQQATNFTQGSGIFLTAIGLWLYDRSKKGNLYESCKVKEFEKDALELEEQTMEDEKSYPSSGTQSPFYGKNFLPQITPRLDSVVPLISDSPMTPNSVYSNEGVTSSVSGNATPASVRQSTQNDFSNSNIHDRRSSYTFQLNNFKAPQPSRLWATETVPTLKI</sequence>
<proteinExistence type="evidence at protein level"/>